<proteinExistence type="inferred from homology"/>
<feature type="chain" id="PRO_0000152985" description="GTP 3',8-cyclase">
    <location>
        <begin position="1"/>
        <end position="331"/>
    </location>
</feature>
<feature type="domain" description="Radical SAM core" evidence="2">
    <location>
        <begin position="6"/>
        <end position="231"/>
    </location>
</feature>
<feature type="binding site" evidence="1">
    <location>
        <position position="15"/>
    </location>
    <ligand>
        <name>GTP</name>
        <dbReference type="ChEBI" id="CHEBI:37565"/>
    </ligand>
</feature>
<feature type="binding site" evidence="1">
    <location>
        <position position="22"/>
    </location>
    <ligand>
        <name>[4Fe-4S] cluster</name>
        <dbReference type="ChEBI" id="CHEBI:49883"/>
        <label>1</label>
        <note>4Fe-4S-S-AdoMet</note>
    </ligand>
</feature>
<feature type="binding site" evidence="1">
    <location>
        <position position="26"/>
    </location>
    <ligand>
        <name>[4Fe-4S] cluster</name>
        <dbReference type="ChEBI" id="CHEBI:49883"/>
        <label>1</label>
        <note>4Fe-4S-S-AdoMet</note>
    </ligand>
</feature>
<feature type="binding site" evidence="1">
    <location>
        <position position="28"/>
    </location>
    <ligand>
        <name>S-adenosyl-L-methionine</name>
        <dbReference type="ChEBI" id="CHEBI:59789"/>
    </ligand>
</feature>
<feature type="binding site" evidence="1">
    <location>
        <position position="29"/>
    </location>
    <ligand>
        <name>[4Fe-4S] cluster</name>
        <dbReference type="ChEBI" id="CHEBI:49883"/>
        <label>1</label>
        <note>4Fe-4S-S-AdoMet</note>
    </ligand>
</feature>
<feature type="binding site" evidence="1">
    <location>
        <position position="64"/>
    </location>
    <ligand>
        <name>GTP</name>
        <dbReference type="ChEBI" id="CHEBI:37565"/>
    </ligand>
</feature>
<feature type="binding site" evidence="1">
    <location>
        <position position="68"/>
    </location>
    <ligand>
        <name>S-adenosyl-L-methionine</name>
        <dbReference type="ChEBI" id="CHEBI:59789"/>
    </ligand>
</feature>
<feature type="binding site" evidence="1">
    <location>
        <position position="98"/>
    </location>
    <ligand>
        <name>GTP</name>
        <dbReference type="ChEBI" id="CHEBI:37565"/>
    </ligand>
</feature>
<feature type="binding site" evidence="1">
    <location>
        <position position="122"/>
    </location>
    <ligand>
        <name>S-adenosyl-L-methionine</name>
        <dbReference type="ChEBI" id="CHEBI:59789"/>
    </ligand>
</feature>
<feature type="binding site" evidence="1">
    <location>
        <position position="158"/>
    </location>
    <ligand>
        <name>GTP</name>
        <dbReference type="ChEBI" id="CHEBI:37565"/>
    </ligand>
</feature>
<feature type="binding site" evidence="1">
    <location>
        <position position="192"/>
    </location>
    <ligand>
        <name>S-adenosyl-L-methionine</name>
        <dbReference type="ChEBI" id="CHEBI:59789"/>
    </ligand>
</feature>
<feature type="binding site" evidence="1">
    <location>
        <position position="255"/>
    </location>
    <ligand>
        <name>[4Fe-4S] cluster</name>
        <dbReference type="ChEBI" id="CHEBI:49883"/>
        <label>2</label>
        <note>4Fe-4S-substrate</note>
    </ligand>
</feature>
<feature type="binding site" evidence="1">
    <location>
        <position position="258"/>
    </location>
    <ligand>
        <name>[4Fe-4S] cluster</name>
        <dbReference type="ChEBI" id="CHEBI:49883"/>
        <label>2</label>
        <note>4Fe-4S-substrate</note>
    </ligand>
</feature>
<feature type="binding site" evidence="1">
    <location>
        <begin position="260"/>
        <end position="262"/>
    </location>
    <ligand>
        <name>GTP</name>
        <dbReference type="ChEBI" id="CHEBI:37565"/>
    </ligand>
</feature>
<feature type="binding site" evidence="1">
    <location>
        <position position="272"/>
    </location>
    <ligand>
        <name>[4Fe-4S] cluster</name>
        <dbReference type="ChEBI" id="CHEBI:49883"/>
        <label>2</label>
        <note>4Fe-4S-substrate</note>
    </ligand>
</feature>
<reference key="1">
    <citation type="journal article" date="2000" name="DNA Res.">
        <title>Complete genome structure of the nitrogen-fixing symbiotic bacterium Mesorhizobium loti.</title>
        <authorList>
            <person name="Kaneko T."/>
            <person name="Nakamura Y."/>
            <person name="Sato S."/>
            <person name="Asamizu E."/>
            <person name="Kato T."/>
            <person name="Sasamoto S."/>
            <person name="Watanabe A."/>
            <person name="Idesawa K."/>
            <person name="Ishikawa A."/>
            <person name="Kawashima K."/>
            <person name="Kimura T."/>
            <person name="Kishida Y."/>
            <person name="Kiyokawa C."/>
            <person name="Kohara M."/>
            <person name="Matsumoto M."/>
            <person name="Matsuno A."/>
            <person name="Mochizuki Y."/>
            <person name="Nakayama S."/>
            <person name="Nakazaki N."/>
            <person name="Shimpo S."/>
            <person name="Sugimoto M."/>
            <person name="Takeuchi C."/>
            <person name="Yamada M."/>
            <person name="Tabata S."/>
        </authorList>
    </citation>
    <scope>NUCLEOTIDE SEQUENCE [LARGE SCALE GENOMIC DNA]</scope>
    <source>
        <strain>LMG 29417 / CECT 9101 / MAFF 303099</strain>
    </source>
</reference>
<accession>Q98MK6</accession>
<organism>
    <name type="scientific">Mesorhizobium japonicum (strain LMG 29417 / CECT 9101 / MAFF 303099)</name>
    <name type="common">Mesorhizobium loti (strain MAFF 303099)</name>
    <dbReference type="NCBI Taxonomy" id="266835"/>
    <lineage>
        <taxon>Bacteria</taxon>
        <taxon>Pseudomonadati</taxon>
        <taxon>Pseudomonadota</taxon>
        <taxon>Alphaproteobacteria</taxon>
        <taxon>Hyphomicrobiales</taxon>
        <taxon>Phyllobacteriaceae</taxon>
        <taxon>Mesorhizobium</taxon>
    </lineage>
</organism>
<evidence type="ECO:0000255" key="1">
    <source>
        <dbReference type="HAMAP-Rule" id="MF_01225"/>
    </source>
</evidence>
<evidence type="ECO:0000255" key="2">
    <source>
        <dbReference type="PROSITE-ProRule" id="PRU01266"/>
    </source>
</evidence>
<sequence>MNMIDPFGRTISYLRVSVTDRCDFRCTYCMAEDMAFLPKKDLLSLEELDRLCSVFIEKGVRRLRLTGGEPLVRKNIMHLVRQLSRHLDSGALEELTLTTNGSQLSRFAAELADCGVKRINVSLDTLDADKFHQITRWGHLDKVMQGIDAAQAAGLKVKLNAVALKDFNDAELPDMMRWAHGRGMDLTVIETMPMGEIDADRTDQYLPLSLLRASLERQFTLTDIPFKTGGPARYVHVAETGGKLGFITPMTHNFCESCNRVRLTCTGTLYMCLGQEDAADLRAPLRASEGNELVADAIDEAIGRKPKGHDFIIDRRTSRPSVSRHMSVTGG</sequence>
<dbReference type="EC" id="4.1.99.22" evidence="1"/>
<dbReference type="EMBL" id="BA000012">
    <property type="protein sequence ID" value="BAB48107.1"/>
    <property type="molecule type" value="Genomic_DNA"/>
</dbReference>
<dbReference type="RefSeq" id="WP_010909463.1">
    <property type="nucleotide sequence ID" value="NC_002678.2"/>
</dbReference>
<dbReference type="SMR" id="Q98MK6"/>
<dbReference type="GeneID" id="66684067"/>
<dbReference type="KEGG" id="mlo:mlr0541"/>
<dbReference type="eggNOG" id="COG2896">
    <property type="taxonomic scope" value="Bacteria"/>
</dbReference>
<dbReference type="HOGENOM" id="CLU_009273_0_1_5"/>
<dbReference type="UniPathway" id="UPA00344"/>
<dbReference type="Proteomes" id="UP000000552">
    <property type="component" value="Chromosome"/>
</dbReference>
<dbReference type="GO" id="GO:0051539">
    <property type="term" value="F:4 iron, 4 sulfur cluster binding"/>
    <property type="evidence" value="ECO:0007669"/>
    <property type="project" value="UniProtKB-UniRule"/>
</dbReference>
<dbReference type="GO" id="GO:0061799">
    <property type="term" value="F:cyclic pyranopterin monophosphate synthase activity"/>
    <property type="evidence" value="ECO:0007669"/>
    <property type="project" value="TreeGrafter"/>
</dbReference>
<dbReference type="GO" id="GO:0061798">
    <property type="term" value="F:GTP 3',8'-cyclase activity"/>
    <property type="evidence" value="ECO:0007669"/>
    <property type="project" value="UniProtKB-UniRule"/>
</dbReference>
<dbReference type="GO" id="GO:0005525">
    <property type="term" value="F:GTP binding"/>
    <property type="evidence" value="ECO:0007669"/>
    <property type="project" value="UniProtKB-UniRule"/>
</dbReference>
<dbReference type="GO" id="GO:0046872">
    <property type="term" value="F:metal ion binding"/>
    <property type="evidence" value="ECO:0007669"/>
    <property type="project" value="UniProtKB-KW"/>
</dbReference>
<dbReference type="GO" id="GO:1904047">
    <property type="term" value="F:S-adenosyl-L-methionine binding"/>
    <property type="evidence" value="ECO:0007669"/>
    <property type="project" value="UniProtKB-UniRule"/>
</dbReference>
<dbReference type="GO" id="GO:0006777">
    <property type="term" value="P:Mo-molybdopterin cofactor biosynthetic process"/>
    <property type="evidence" value="ECO:0007669"/>
    <property type="project" value="UniProtKB-UniRule"/>
</dbReference>
<dbReference type="CDD" id="cd01335">
    <property type="entry name" value="Radical_SAM"/>
    <property type="match status" value="1"/>
</dbReference>
<dbReference type="CDD" id="cd21117">
    <property type="entry name" value="Twitch_MoaA"/>
    <property type="match status" value="1"/>
</dbReference>
<dbReference type="Gene3D" id="3.20.20.70">
    <property type="entry name" value="Aldolase class I"/>
    <property type="match status" value="1"/>
</dbReference>
<dbReference type="HAMAP" id="MF_01225_B">
    <property type="entry name" value="MoaA_B"/>
    <property type="match status" value="1"/>
</dbReference>
<dbReference type="InterPro" id="IPR013785">
    <property type="entry name" value="Aldolase_TIM"/>
</dbReference>
<dbReference type="InterPro" id="IPR006638">
    <property type="entry name" value="Elp3/MiaA/NifB-like_rSAM"/>
</dbReference>
<dbReference type="InterPro" id="IPR013483">
    <property type="entry name" value="MoaA"/>
</dbReference>
<dbReference type="InterPro" id="IPR000385">
    <property type="entry name" value="MoaA_NifB_PqqE_Fe-S-bd_CS"/>
</dbReference>
<dbReference type="InterPro" id="IPR010505">
    <property type="entry name" value="MoaA_twitch"/>
</dbReference>
<dbReference type="InterPro" id="IPR050105">
    <property type="entry name" value="MoCo_biosynth_MoaA/MoaC"/>
</dbReference>
<dbReference type="InterPro" id="IPR007197">
    <property type="entry name" value="rSAM"/>
</dbReference>
<dbReference type="NCBIfam" id="TIGR02666">
    <property type="entry name" value="moaA"/>
    <property type="match status" value="1"/>
</dbReference>
<dbReference type="PANTHER" id="PTHR22960:SF0">
    <property type="entry name" value="MOLYBDENUM COFACTOR BIOSYNTHESIS PROTEIN 1"/>
    <property type="match status" value="1"/>
</dbReference>
<dbReference type="PANTHER" id="PTHR22960">
    <property type="entry name" value="MOLYBDOPTERIN COFACTOR SYNTHESIS PROTEIN A"/>
    <property type="match status" value="1"/>
</dbReference>
<dbReference type="Pfam" id="PF13353">
    <property type="entry name" value="Fer4_12"/>
    <property type="match status" value="1"/>
</dbReference>
<dbReference type="Pfam" id="PF06463">
    <property type="entry name" value="Mob_synth_C"/>
    <property type="match status" value="1"/>
</dbReference>
<dbReference type="Pfam" id="PF04055">
    <property type="entry name" value="Radical_SAM"/>
    <property type="match status" value="1"/>
</dbReference>
<dbReference type="SFLD" id="SFLDG01383">
    <property type="entry name" value="cyclic_pyranopterin_phosphate"/>
    <property type="match status" value="1"/>
</dbReference>
<dbReference type="SFLD" id="SFLDG01067">
    <property type="entry name" value="SPASM/twitch_domain_containing"/>
    <property type="match status" value="1"/>
</dbReference>
<dbReference type="SMART" id="SM00729">
    <property type="entry name" value="Elp3"/>
    <property type="match status" value="1"/>
</dbReference>
<dbReference type="SUPFAM" id="SSF102114">
    <property type="entry name" value="Radical SAM enzymes"/>
    <property type="match status" value="1"/>
</dbReference>
<dbReference type="PROSITE" id="PS01305">
    <property type="entry name" value="MOAA_NIFB_PQQE"/>
    <property type="match status" value="1"/>
</dbReference>
<dbReference type="PROSITE" id="PS51918">
    <property type="entry name" value="RADICAL_SAM"/>
    <property type="match status" value="1"/>
</dbReference>
<comment type="function">
    <text evidence="1">Catalyzes the cyclization of GTP to (8S)-3',8-cyclo-7,8-dihydroguanosine 5'-triphosphate.</text>
</comment>
<comment type="catalytic activity">
    <reaction evidence="1">
        <text>GTP + AH2 + S-adenosyl-L-methionine = (8S)-3',8-cyclo-7,8-dihydroguanosine 5'-triphosphate + 5'-deoxyadenosine + L-methionine + A + H(+)</text>
        <dbReference type="Rhea" id="RHEA:49576"/>
        <dbReference type="ChEBI" id="CHEBI:13193"/>
        <dbReference type="ChEBI" id="CHEBI:15378"/>
        <dbReference type="ChEBI" id="CHEBI:17319"/>
        <dbReference type="ChEBI" id="CHEBI:17499"/>
        <dbReference type="ChEBI" id="CHEBI:37565"/>
        <dbReference type="ChEBI" id="CHEBI:57844"/>
        <dbReference type="ChEBI" id="CHEBI:59789"/>
        <dbReference type="ChEBI" id="CHEBI:131766"/>
        <dbReference type="EC" id="4.1.99.22"/>
    </reaction>
</comment>
<comment type="cofactor">
    <cofactor evidence="1">
        <name>[4Fe-4S] cluster</name>
        <dbReference type="ChEBI" id="CHEBI:49883"/>
    </cofactor>
    <text evidence="1">Binds 2 [4Fe-4S] clusters. Binds 1 [4Fe-4S] cluster coordinated with 3 cysteines and an exchangeable S-adenosyl-L-methionine and 1 [4Fe-4S] cluster coordinated with 3 cysteines and the GTP-derived substrate.</text>
</comment>
<comment type="pathway">
    <text evidence="1">Cofactor biosynthesis; molybdopterin biosynthesis.</text>
</comment>
<comment type="subunit">
    <text evidence="1">Monomer and homodimer.</text>
</comment>
<comment type="similarity">
    <text evidence="1">Belongs to the radical SAM superfamily. MoaA family.</text>
</comment>
<keyword id="KW-0004">4Fe-4S</keyword>
<keyword id="KW-0342">GTP-binding</keyword>
<keyword id="KW-0408">Iron</keyword>
<keyword id="KW-0411">Iron-sulfur</keyword>
<keyword id="KW-0456">Lyase</keyword>
<keyword id="KW-0479">Metal-binding</keyword>
<keyword id="KW-0501">Molybdenum cofactor biosynthesis</keyword>
<keyword id="KW-0547">Nucleotide-binding</keyword>
<keyword id="KW-0949">S-adenosyl-L-methionine</keyword>
<protein>
    <recommendedName>
        <fullName evidence="1">GTP 3',8-cyclase</fullName>
        <ecNumber evidence="1">4.1.99.22</ecNumber>
    </recommendedName>
    <alternativeName>
        <fullName evidence="1">Molybdenum cofactor biosynthesis protein A</fullName>
    </alternativeName>
</protein>
<name>MOAA_RHILO</name>
<gene>
    <name evidence="1" type="primary">moaA</name>
    <name type="ordered locus">mlr0541</name>
</gene>